<protein>
    <recommendedName>
        <fullName>Pyruvylated Gal-beta-1,3-epitope synthesis protein 2</fullName>
        <shortName>PvGal synthesis protein 2</shortName>
    </recommendedName>
    <alternativeName>
        <fullName>Meiotically up-regulated gene 53 protein</fullName>
    </alternativeName>
</protein>
<evidence type="ECO:0000255" key="1"/>
<evidence type="ECO:0000269" key="2">
    <source>
    </source>
</evidence>
<evidence type="ECO:0000269" key="3">
    <source>
    </source>
</evidence>
<evidence type="ECO:0000305" key="4"/>
<comment type="function">
    <text evidence="2 3">Involved in cell wall biogenesis. Has a role in the addition of Gal-beta1,3 moeities to galactomannans and their subsequent pyruvylation. Has a role in meiosis.</text>
</comment>
<comment type="subcellular location">
    <subcellularLocation>
        <location>Endoplasmic reticulum membrane</location>
        <topology>Single-pass type II membrane protein</topology>
    </subcellularLocation>
    <subcellularLocation>
        <location>Golgi apparatus membrane</location>
        <topology>Single-pass type II membrane protein</topology>
    </subcellularLocation>
    <text evidence="4">Recycles between endoplasmic reticulum and Golgi.</text>
</comment>
<accession>O14001</accession>
<dbReference type="EMBL" id="CU329670">
    <property type="protein sequence ID" value="CAB11681.1"/>
    <property type="molecule type" value="Genomic_DNA"/>
</dbReference>
<dbReference type="PIR" id="T38455">
    <property type="entry name" value="T38455"/>
</dbReference>
<dbReference type="RefSeq" id="NP_594408.1">
    <property type="nucleotide sequence ID" value="NM_001019839.2"/>
</dbReference>
<dbReference type="BioGRID" id="278392">
    <property type="interactions" value="29"/>
</dbReference>
<dbReference type="STRING" id="284812.O14001"/>
<dbReference type="iPTMnet" id="O14001"/>
<dbReference type="PaxDb" id="4896-SPAC27E2.07.1"/>
<dbReference type="EnsemblFungi" id="SPAC27E2.07.1">
    <property type="protein sequence ID" value="SPAC27E2.07.1:pep"/>
    <property type="gene ID" value="SPAC27E2.07"/>
</dbReference>
<dbReference type="GeneID" id="2541902"/>
<dbReference type="KEGG" id="spo:2541902"/>
<dbReference type="PomBase" id="SPAC27E2.07">
    <property type="gene designation" value="pvg2"/>
</dbReference>
<dbReference type="VEuPathDB" id="FungiDB:SPAC27E2.07"/>
<dbReference type="HOGENOM" id="CLU_708152_0_0_1"/>
<dbReference type="InParanoid" id="O14001"/>
<dbReference type="OMA" id="ESSDICF"/>
<dbReference type="PRO" id="PR:O14001"/>
<dbReference type="Proteomes" id="UP000002485">
    <property type="component" value="Chromosome I"/>
</dbReference>
<dbReference type="GO" id="GO:0051286">
    <property type="term" value="C:cell tip"/>
    <property type="evidence" value="ECO:0000314"/>
    <property type="project" value="PomBase"/>
</dbReference>
<dbReference type="GO" id="GO:0005829">
    <property type="term" value="C:cytosol"/>
    <property type="evidence" value="ECO:0007005"/>
    <property type="project" value="PomBase"/>
</dbReference>
<dbReference type="GO" id="GO:0005789">
    <property type="term" value="C:endoplasmic reticulum membrane"/>
    <property type="evidence" value="ECO:0007669"/>
    <property type="project" value="UniProtKB-SubCell"/>
</dbReference>
<dbReference type="GO" id="GO:0000139">
    <property type="term" value="C:Golgi membrane"/>
    <property type="evidence" value="ECO:0007669"/>
    <property type="project" value="UniProtKB-SubCell"/>
</dbReference>
<dbReference type="GO" id="GO:0005634">
    <property type="term" value="C:nucleus"/>
    <property type="evidence" value="ECO:0007005"/>
    <property type="project" value="PomBase"/>
</dbReference>
<dbReference type="GO" id="GO:0000030">
    <property type="term" value="F:mannosyltransferase activity"/>
    <property type="evidence" value="ECO:0000318"/>
    <property type="project" value="GO_Central"/>
</dbReference>
<dbReference type="GO" id="GO:0051072">
    <property type="term" value="P:4,6-pyruvylated galactose residue biosynthetic process"/>
    <property type="evidence" value="ECO:0000315"/>
    <property type="project" value="PomBase"/>
</dbReference>
<dbReference type="GO" id="GO:0071555">
    <property type="term" value="P:cell wall organization"/>
    <property type="evidence" value="ECO:0007669"/>
    <property type="project" value="UniProtKB-KW"/>
</dbReference>
<dbReference type="GO" id="GO:0009272">
    <property type="term" value="P:fungal-type cell wall biogenesis"/>
    <property type="evidence" value="ECO:0000305"/>
    <property type="project" value="PomBase"/>
</dbReference>
<dbReference type="GO" id="GO:0051999">
    <property type="term" value="P:mannosyl-inositol phosphorylceramide biosynthetic process"/>
    <property type="evidence" value="ECO:0000318"/>
    <property type="project" value="GO_Central"/>
</dbReference>
<dbReference type="GO" id="GO:0051321">
    <property type="term" value="P:meiotic cell cycle"/>
    <property type="evidence" value="ECO:0007669"/>
    <property type="project" value="UniProtKB-KW"/>
</dbReference>
<dbReference type="InterPro" id="IPR051706">
    <property type="entry name" value="Glycosyltransferase_domain"/>
</dbReference>
<dbReference type="PANTHER" id="PTHR32385">
    <property type="entry name" value="MANNOSYL PHOSPHORYLINOSITOL CERAMIDE SYNTHASE"/>
    <property type="match status" value="1"/>
</dbReference>
<dbReference type="PANTHER" id="PTHR32385:SF20">
    <property type="entry name" value="MANNOSYL PHOSPHORYLINOSITOL CERAMIDE SYNTHASE CSH1-RELATED"/>
    <property type="match status" value="1"/>
</dbReference>
<keyword id="KW-0961">Cell wall biogenesis/degradation</keyword>
<keyword id="KW-0256">Endoplasmic reticulum</keyword>
<keyword id="KW-0333">Golgi apparatus</keyword>
<keyword id="KW-0469">Meiosis</keyword>
<keyword id="KW-0472">Membrane</keyword>
<keyword id="KW-1185">Reference proteome</keyword>
<keyword id="KW-0735">Signal-anchor</keyword>
<keyword id="KW-0812">Transmembrane</keyword>
<keyword id="KW-1133">Transmembrane helix</keyword>
<gene>
    <name type="primary">pvg2</name>
    <name type="synonym">mug53</name>
    <name type="ORF">SPAC27E2.07</name>
</gene>
<organism>
    <name type="scientific">Schizosaccharomyces pombe (strain 972 / ATCC 24843)</name>
    <name type="common">Fission yeast</name>
    <dbReference type="NCBI Taxonomy" id="284812"/>
    <lineage>
        <taxon>Eukaryota</taxon>
        <taxon>Fungi</taxon>
        <taxon>Dikarya</taxon>
        <taxon>Ascomycota</taxon>
        <taxon>Taphrinomycotina</taxon>
        <taxon>Schizosaccharomycetes</taxon>
        <taxon>Schizosaccharomycetales</taxon>
        <taxon>Schizosaccharomycetaceae</taxon>
        <taxon>Schizosaccharomyces</taxon>
    </lineage>
</organism>
<feature type="chain" id="PRO_0000076295" description="Pyruvylated Gal-beta-1,3-epitope synthesis protein 2">
    <location>
        <begin position="1"/>
        <end position="389"/>
    </location>
</feature>
<feature type="topological domain" description="Cytoplasmic" evidence="1">
    <location>
        <begin position="1"/>
        <end position="16"/>
    </location>
</feature>
<feature type="transmembrane region" description="Helical" evidence="1">
    <location>
        <begin position="17"/>
        <end position="37"/>
    </location>
</feature>
<feature type="topological domain" description="Lumenal" evidence="1">
    <location>
        <begin position="38"/>
        <end position="389"/>
    </location>
</feature>
<sequence>MTKLWVNFFSQKLLRLLIPSIIVVFAFAALFAIYSPIQLGGINFYKRTNLFTVEELGEKELELSKTVTIDIYRKAMCMDDLEQSRKCTTFGLDPPISAHLFYTYNRDTGMNRVARQWNRRIPRVFHTIKGSNFIELSQFTAFEVELRVSHPNWAFVSWSHDDLNELVDKSYHNLHNAWSQLSREAKDQWGFLLGLYEYGGVWMSRSLQLKKNIDKFVYAAELSVKQFTENITSSTVEEFQPIFMAPKSLQYDFMIATPKHPFVLSLINELCKSEVLLKILSKRPYHGLDAAEALFAENRESITIREQEFFVNTYIDDGKVFVKNNPHIIFIPTEAFASTWDFLPSEESSEMCFADSPLFDPDYCISHSSKPDGNELAIYWSNSFDLITA</sequence>
<proteinExistence type="evidence at protein level"/>
<name>PVG2_SCHPO</name>
<reference key="1">
    <citation type="journal article" date="2002" name="Nature">
        <title>The genome sequence of Schizosaccharomyces pombe.</title>
        <authorList>
            <person name="Wood V."/>
            <person name="Gwilliam R."/>
            <person name="Rajandream M.A."/>
            <person name="Lyne M.H."/>
            <person name="Lyne R."/>
            <person name="Stewart A."/>
            <person name="Sgouros J.G."/>
            <person name="Peat N."/>
            <person name="Hayles J."/>
            <person name="Baker S.G."/>
            <person name="Basham D."/>
            <person name="Bowman S."/>
            <person name="Brooks K."/>
            <person name="Brown D."/>
            <person name="Brown S."/>
            <person name="Chillingworth T."/>
            <person name="Churcher C.M."/>
            <person name="Collins M."/>
            <person name="Connor R."/>
            <person name="Cronin A."/>
            <person name="Davis P."/>
            <person name="Feltwell T."/>
            <person name="Fraser A."/>
            <person name="Gentles S."/>
            <person name="Goble A."/>
            <person name="Hamlin N."/>
            <person name="Harris D.E."/>
            <person name="Hidalgo J."/>
            <person name="Hodgson G."/>
            <person name="Holroyd S."/>
            <person name="Hornsby T."/>
            <person name="Howarth S."/>
            <person name="Huckle E.J."/>
            <person name="Hunt S."/>
            <person name="Jagels K."/>
            <person name="James K.D."/>
            <person name="Jones L."/>
            <person name="Jones M."/>
            <person name="Leather S."/>
            <person name="McDonald S."/>
            <person name="McLean J."/>
            <person name="Mooney P."/>
            <person name="Moule S."/>
            <person name="Mungall K.L."/>
            <person name="Murphy L.D."/>
            <person name="Niblett D."/>
            <person name="Odell C."/>
            <person name="Oliver K."/>
            <person name="O'Neil S."/>
            <person name="Pearson D."/>
            <person name="Quail M.A."/>
            <person name="Rabbinowitsch E."/>
            <person name="Rutherford K.M."/>
            <person name="Rutter S."/>
            <person name="Saunders D."/>
            <person name="Seeger K."/>
            <person name="Sharp S."/>
            <person name="Skelton J."/>
            <person name="Simmonds M.N."/>
            <person name="Squares R."/>
            <person name="Squares S."/>
            <person name="Stevens K."/>
            <person name="Taylor K."/>
            <person name="Taylor R.G."/>
            <person name="Tivey A."/>
            <person name="Walsh S.V."/>
            <person name="Warren T."/>
            <person name="Whitehead S."/>
            <person name="Woodward J.R."/>
            <person name="Volckaert G."/>
            <person name="Aert R."/>
            <person name="Robben J."/>
            <person name="Grymonprez B."/>
            <person name="Weltjens I."/>
            <person name="Vanstreels E."/>
            <person name="Rieger M."/>
            <person name="Schaefer M."/>
            <person name="Mueller-Auer S."/>
            <person name="Gabel C."/>
            <person name="Fuchs M."/>
            <person name="Duesterhoeft A."/>
            <person name="Fritzc C."/>
            <person name="Holzer E."/>
            <person name="Moestl D."/>
            <person name="Hilbert H."/>
            <person name="Borzym K."/>
            <person name="Langer I."/>
            <person name="Beck A."/>
            <person name="Lehrach H."/>
            <person name="Reinhardt R."/>
            <person name="Pohl T.M."/>
            <person name="Eger P."/>
            <person name="Zimmermann W."/>
            <person name="Wedler H."/>
            <person name="Wambutt R."/>
            <person name="Purnelle B."/>
            <person name="Goffeau A."/>
            <person name="Cadieu E."/>
            <person name="Dreano S."/>
            <person name="Gloux S."/>
            <person name="Lelaure V."/>
            <person name="Mottier S."/>
            <person name="Galibert F."/>
            <person name="Aves S.J."/>
            <person name="Xiang Z."/>
            <person name="Hunt C."/>
            <person name="Moore K."/>
            <person name="Hurst S.M."/>
            <person name="Lucas M."/>
            <person name="Rochet M."/>
            <person name="Gaillardin C."/>
            <person name="Tallada V.A."/>
            <person name="Garzon A."/>
            <person name="Thode G."/>
            <person name="Daga R.R."/>
            <person name="Cruzado L."/>
            <person name="Jimenez J."/>
            <person name="Sanchez M."/>
            <person name="del Rey F."/>
            <person name="Benito J."/>
            <person name="Dominguez A."/>
            <person name="Revuelta J.L."/>
            <person name="Moreno S."/>
            <person name="Armstrong J."/>
            <person name="Forsburg S.L."/>
            <person name="Cerutti L."/>
            <person name="Lowe T."/>
            <person name="McCombie W.R."/>
            <person name="Paulsen I."/>
            <person name="Potashkin J."/>
            <person name="Shpakovski G.V."/>
            <person name="Ussery D."/>
            <person name="Barrell B.G."/>
            <person name="Nurse P."/>
        </authorList>
    </citation>
    <scope>NUCLEOTIDE SEQUENCE [LARGE SCALE GENOMIC DNA]</scope>
    <source>
        <strain>972 / ATCC 24843</strain>
    </source>
</reference>
<reference key="2">
    <citation type="journal article" date="2004" name="J. Biol. Chem.">
        <title>Five genes involved in biosynthesis of the pyruvylated Galbeta1,3-epitope in Schizosaccharomyces pombe N-linked glycans.</title>
        <authorList>
            <person name="Andreishcheva E.N."/>
            <person name="Kunkel J.P."/>
            <person name="Gemmill T.R."/>
            <person name="Trimble R.B."/>
        </authorList>
    </citation>
    <scope>FUNCTION</scope>
</reference>
<reference key="3">
    <citation type="journal article" date="2005" name="Curr. Biol.">
        <title>A large-scale screen in S. pombe identifies seven novel genes required for critical meiotic events.</title>
        <authorList>
            <person name="Martin-Castellanos C."/>
            <person name="Blanco M."/>
            <person name="Rozalen A.E."/>
            <person name="Perez-Hidalgo L."/>
            <person name="Garcia A.I."/>
            <person name="Conde F."/>
            <person name="Mata J."/>
            <person name="Ellermeier C."/>
            <person name="Davis L."/>
            <person name="San-Segundo P."/>
            <person name="Smith G.R."/>
            <person name="Moreno S."/>
        </authorList>
    </citation>
    <scope>FUNCTION IN MEIOSIS</scope>
</reference>